<name>RS18_NITEU</name>
<feature type="chain" id="PRO_0000111195" description="Small ribosomal subunit protein bS18">
    <location>
        <begin position="1"/>
        <end position="76"/>
    </location>
</feature>
<protein>
    <recommendedName>
        <fullName evidence="1">Small ribosomal subunit protein bS18</fullName>
    </recommendedName>
    <alternativeName>
        <fullName evidence="2">30S ribosomal protein S18</fullName>
    </alternativeName>
</protein>
<reference key="1">
    <citation type="journal article" date="2003" name="J. Bacteriol.">
        <title>Complete genome sequence of the ammonia-oxidizing bacterium and obligate chemolithoautotroph Nitrosomonas europaea.</title>
        <authorList>
            <person name="Chain P."/>
            <person name="Lamerdin J.E."/>
            <person name="Larimer F.W."/>
            <person name="Regala W."/>
            <person name="Lao V."/>
            <person name="Land M.L."/>
            <person name="Hauser L."/>
            <person name="Hooper A.B."/>
            <person name="Klotz M.G."/>
            <person name="Norton J."/>
            <person name="Sayavedra-Soto L.A."/>
            <person name="Arciero D.M."/>
            <person name="Hommes N.G."/>
            <person name="Whittaker M.M."/>
            <person name="Arp D.J."/>
        </authorList>
    </citation>
    <scope>NUCLEOTIDE SEQUENCE [LARGE SCALE GENOMIC DNA]</scope>
    <source>
        <strain>ATCC 19718 / CIP 103999 / KCTC 2705 / NBRC 14298</strain>
    </source>
</reference>
<dbReference type="EMBL" id="AL954747">
    <property type="protein sequence ID" value="CAD84107.1"/>
    <property type="status" value="ALT_INIT"/>
    <property type="molecule type" value="Genomic_DNA"/>
</dbReference>
<dbReference type="RefSeq" id="WP_041356939.1">
    <property type="nucleotide sequence ID" value="NC_004757.1"/>
</dbReference>
<dbReference type="SMR" id="Q82XQ8"/>
<dbReference type="STRING" id="228410.NE0196"/>
<dbReference type="GeneID" id="87103403"/>
<dbReference type="KEGG" id="neu:NE0196"/>
<dbReference type="eggNOG" id="COG0238">
    <property type="taxonomic scope" value="Bacteria"/>
</dbReference>
<dbReference type="HOGENOM" id="CLU_148710_0_3_4"/>
<dbReference type="PhylomeDB" id="Q82XQ8"/>
<dbReference type="Proteomes" id="UP000001416">
    <property type="component" value="Chromosome"/>
</dbReference>
<dbReference type="GO" id="GO:0022627">
    <property type="term" value="C:cytosolic small ribosomal subunit"/>
    <property type="evidence" value="ECO:0007669"/>
    <property type="project" value="TreeGrafter"/>
</dbReference>
<dbReference type="GO" id="GO:0070181">
    <property type="term" value="F:small ribosomal subunit rRNA binding"/>
    <property type="evidence" value="ECO:0007669"/>
    <property type="project" value="TreeGrafter"/>
</dbReference>
<dbReference type="GO" id="GO:0003735">
    <property type="term" value="F:structural constituent of ribosome"/>
    <property type="evidence" value="ECO:0007669"/>
    <property type="project" value="InterPro"/>
</dbReference>
<dbReference type="GO" id="GO:0006412">
    <property type="term" value="P:translation"/>
    <property type="evidence" value="ECO:0007669"/>
    <property type="project" value="UniProtKB-UniRule"/>
</dbReference>
<dbReference type="Gene3D" id="4.10.640.10">
    <property type="entry name" value="Ribosomal protein S18"/>
    <property type="match status" value="1"/>
</dbReference>
<dbReference type="HAMAP" id="MF_00270">
    <property type="entry name" value="Ribosomal_bS18"/>
    <property type="match status" value="1"/>
</dbReference>
<dbReference type="InterPro" id="IPR001648">
    <property type="entry name" value="Ribosomal_bS18"/>
</dbReference>
<dbReference type="InterPro" id="IPR018275">
    <property type="entry name" value="Ribosomal_bS18_CS"/>
</dbReference>
<dbReference type="InterPro" id="IPR036870">
    <property type="entry name" value="Ribosomal_bS18_sf"/>
</dbReference>
<dbReference type="NCBIfam" id="TIGR00165">
    <property type="entry name" value="S18"/>
    <property type="match status" value="1"/>
</dbReference>
<dbReference type="PANTHER" id="PTHR13479">
    <property type="entry name" value="30S RIBOSOMAL PROTEIN S18"/>
    <property type="match status" value="1"/>
</dbReference>
<dbReference type="PANTHER" id="PTHR13479:SF40">
    <property type="entry name" value="SMALL RIBOSOMAL SUBUNIT PROTEIN BS18M"/>
    <property type="match status" value="1"/>
</dbReference>
<dbReference type="Pfam" id="PF01084">
    <property type="entry name" value="Ribosomal_S18"/>
    <property type="match status" value="1"/>
</dbReference>
<dbReference type="PRINTS" id="PR00974">
    <property type="entry name" value="RIBOSOMALS18"/>
</dbReference>
<dbReference type="SUPFAM" id="SSF46911">
    <property type="entry name" value="Ribosomal protein S18"/>
    <property type="match status" value="1"/>
</dbReference>
<dbReference type="PROSITE" id="PS00057">
    <property type="entry name" value="RIBOSOMAL_S18"/>
    <property type="match status" value="1"/>
</dbReference>
<proteinExistence type="inferred from homology"/>
<evidence type="ECO:0000255" key="1">
    <source>
        <dbReference type="HAMAP-Rule" id="MF_00270"/>
    </source>
</evidence>
<evidence type="ECO:0000305" key="2"/>
<sequence length="76" mass="9028">MANRPLFKRKKFCRFTAEGIKHIDYKDIDLLKDFVSENGRIIPARITGTRAYYQRQLNLAIERARFLALLPYTDQH</sequence>
<organism>
    <name type="scientific">Nitrosomonas europaea (strain ATCC 19718 / CIP 103999 / KCTC 2705 / NBRC 14298)</name>
    <dbReference type="NCBI Taxonomy" id="228410"/>
    <lineage>
        <taxon>Bacteria</taxon>
        <taxon>Pseudomonadati</taxon>
        <taxon>Pseudomonadota</taxon>
        <taxon>Betaproteobacteria</taxon>
        <taxon>Nitrosomonadales</taxon>
        <taxon>Nitrosomonadaceae</taxon>
        <taxon>Nitrosomonas</taxon>
    </lineage>
</organism>
<gene>
    <name evidence="1" type="primary">rpsR</name>
    <name type="ordered locus">NE0196</name>
</gene>
<comment type="function">
    <text evidence="1">Binds as a heterodimer with protein bS6 to the central domain of the 16S rRNA, where it helps stabilize the platform of the 30S subunit.</text>
</comment>
<comment type="subunit">
    <text evidence="1">Part of the 30S ribosomal subunit. Forms a tight heterodimer with protein bS6.</text>
</comment>
<comment type="similarity">
    <text evidence="1">Belongs to the bacterial ribosomal protein bS18 family.</text>
</comment>
<comment type="sequence caution" evidence="2">
    <conflict type="erroneous initiation">
        <sequence resource="EMBL-CDS" id="CAD84107"/>
    </conflict>
</comment>
<accession>Q82XQ8</accession>
<keyword id="KW-1185">Reference proteome</keyword>
<keyword id="KW-0687">Ribonucleoprotein</keyword>
<keyword id="KW-0689">Ribosomal protein</keyword>
<keyword id="KW-0694">RNA-binding</keyword>
<keyword id="KW-0699">rRNA-binding</keyword>